<name>EUTC_SALPK</name>
<accession>B5BB46</accession>
<protein>
    <recommendedName>
        <fullName evidence="1">Ethanolamine ammonia-lyase small subunit</fullName>
        <shortName evidence="1">EAL small subunit</shortName>
        <ecNumber evidence="1">4.3.1.7</ecNumber>
    </recommendedName>
</protein>
<reference key="1">
    <citation type="journal article" date="2009" name="BMC Genomics">
        <title>Pseudogene accumulation in the evolutionary histories of Salmonella enterica serovars Paratyphi A and Typhi.</title>
        <authorList>
            <person name="Holt K.E."/>
            <person name="Thomson N.R."/>
            <person name="Wain J."/>
            <person name="Langridge G.C."/>
            <person name="Hasan R."/>
            <person name="Bhutta Z.A."/>
            <person name="Quail M.A."/>
            <person name="Norbertczak H."/>
            <person name="Walker D."/>
            <person name="Simmonds M."/>
            <person name="White B."/>
            <person name="Bason N."/>
            <person name="Mungall K."/>
            <person name="Dougan G."/>
            <person name="Parkhill J."/>
        </authorList>
    </citation>
    <scope>NUCLEOTIDE SEQUENCE [LARGE SCALE GENOMIC DNA]</scope>
    <source>
        <strain>AKU_12601</strain>
    </source>
</reference>
<proteinExistence type="inferred from homology"/>
<keyword id="KW-1283">Bacterial microcompartment</keyword>
<keyword id="KW-0846">Cobalamin</keyword>
<keyword id="KW-0170">Cobalt</keyword>
<keyword id="KW-0456">Lyase</keyword>
<gene>
    <name evidence="1" type="primary">eutC</name>
    <name type="ordered locus">SSPA0385</name>
</gene>
<organism>
    <name type="scientific">Salmonella paratyphi A (strain AKU_12601)</name>
    <dbReference type="NCBI Taxonomy" id="554290"/>
    <lineage>
        <taxon>Bacteria</taxon>
        <taxon>Pseudomonadati</taxon>
        <taxon>Pseudomonadota</taxon>
        <taxon>Gammaproteobacteria</taxon>
        <taxon>Enterobacterales</taxon>
        <taxon>Enterobacteriaceae</taxon>
        <taxon>Salmonella</taxon>
    </lineage>
</organism>
<dbReference type="EC" id="4.3.1.7" evidence="1"/>
<dbReference type="EMBL" id="FM200053">
    <property type="protein sequence ID" value="CAR58509.1"/>
    <property type="molecule type" value="Genomic_DNA"/>
</dbReference>
<dbReference type="RefSeq" id="WP_000372342.1">
    <property type="nucleotide sequence ID" value="NC_011147.1"/>
</dbReference>
<dbReference type="SMR" id="B5BB46"/>
<dbReference type="KEGG" id="sek:SSPA0385"/>
<dbReference type="HOGENOM" id="CLU_068224_2_0_6"/>
<dbReference type="UniPathway" id="UPA00560"/>
<dbReference type="Proteomes" id="UP000001869">
    <property type="component" value="Chromosome"/>
</dbReference>
<dbReference type="GO" id="GO:0009350">
    <property type="term" value="C:ethanolamine ammonia-lyase complex"/>
    <property type="evidence" value="ECO:0007669"/>
    <property type="project" value="UniProtKB-UniRule"/>
</dbReference>
<dbReference type="GO" id="GO:0031471">
    <property type="term" value="C:ethanolamine degradation polyhedral organelle"/>
    <property type="evidence" value="ECO:0007669"/>
    <property type="project" value="UniProtKB-UniRule"/>
</dbReference>
<dbReference type="GO" id="GO:0031419">
    <property type="term" value="F:cobalamin binding"/>
    <property type="evidence" value="ECO:0007669"/>
    <property type="project" value="UniProtKB-UniRule"/>
</dbReference>
<dbReference type="GO" id="GO:0008851">
    <property type="term" value="F:ethanolamine ammonia-lyase activity"/>
    <property type="evidence" value="ECO:0007669"/>
    <property type="project" value="UniProtKB-UniRule"/>
</dbReference>
<dbReference type="GO" id="GO:0006520">
    <property type="term" value="P:amino acid metabolic process"/>
    <property type="evidence" value="ECO:0007669"/>
    <property type="project" value="InterPro"/>
</dbReference>
<dbReference type="GO" id="GO:0046336">
    <property type="term" value="P:ethanolamine catabolic process"/>
    <property type="evidence" value="ECO:0007669"/>
    <property type="project" value="UniProtKB-UniRule"/>
</dbReference>
<dbReference type="FunFam" id="3.40.50.11240:FF:000001">
    <property type="entry name" value="Ethanolamine ammonia-lyase light chain"/>
    <property type="match status" value="1"/>
</dbReference>
<dbReference type="Gene3D" id="6.10.140.690">
    <property type="match status" value="1"/>
</dbReference>
<dbReference type="Gene3D" id="6.10.250.2060">
    <property type="match status" value="1"/>
</dbReference>
<dbReference type="Gene3D" id="3.40.50.11240">
    <property type="entry name" value="Ethanolamine ammonia-lyase light chain (EutC)"/>
    <property type="match status" value="1"/>
</dbReference>
<dbReference type="HAMAP" id="MF_00601">
    <property type="entry name" value="EutC"/>
    <property type="match status" value="1"/>
</dbReference>
<dbReference type="InterPro" id="IPR009246">
    <property type="entry name" value="EutC"/>
</dbReference>
<dbReference type="InterPro" id="IPR042251">
    <property type="entry name" value="EutC_C"/>
</dbReference>
<dbReference type="NCBIfam" id="NF003971">
    <property type="entry name" value="PRK05465.1"/>
    <property type="match status" value="1"/>
</dbReference>
<dbReference type="PANTHER" id="PTHR39330">
    <property type="entry name" value="ETHANOLAMINE AMMONIA-LYASE LIGHT CHAIN"/>
    <property type="match status" value="1"/>
</dbReference>
<dbReference type="PANTHER" id="PTHR39330:SF1">
    <property type="entry name" value="ETHANOLAMINE AMMONIA-LYASE SMALL SUBUNIT"/>
    <property type="match status" value="1"/>
</dbReference>
<dbReference type="Pfam" id="PF05985">
    <property type="entry name" value="EutC"/>
    <property type="match status" value="1"/>
</dbReference>
<dbReference type="PIRSF" id="PIRSF018982">
    <property type="entry name" value="EutC"/>
    <property type="match status" value="1"/>
</dbReference>
<comment type="function">
    <text evidence="1">Catalyzes the deamination of various vicinal amino-alcohols to oxo compounds. Allows this organism to utilize ethanolamine as the sole source of nitrogen and carbon in the presence of external vitamin B12.</text>
</comment>
<comment type="catalytic activity">
    <reaction evidence="1">
        <text>ethanolamine = acetaldehyde + NH4(+)</text>
        <dbReference type="Rhea" id="RHEA:15313"/>
        <dbReference type="ChEBI" id="CHEBI:15343"/>
        <dbReference type="ChEBI" id="CHEBI:28938"/>
        <dbReference type="ChEBI" id="CHEBI:57603"/>
        <dbReference type="EC" id="4.3.1.7"/>
    </reaction>
</comment>
<comment type="cofactor">
    <cofactor evidence="1">
        <name>adenosylcob(III)alamin</name>
        <dbReference type="ChEBI" id="CHEBI:18408"/>
    </cofactor>
    <text evidence="1">Binds between the large and small subunits.</text>
</comment>
<comment type="pathway">
    <text evidence="1">Amine and polyamine degradation; ethanolamine degradation.</text>
</comment>
<comment type="subunit">
    <text evidence="1">The basic unit is a heterodimer which dimerizes to form tetramers. The heterotetramers trimerize; 6 large subunits form a core ring with 6 small subunits projecting outwards.</text>
</comment>
<comment type="subcellular location">
    <subcellularLocation>
        <location evidence="1">Bacterial microcompartment</location>
    </subcellularLocation>
</comment>
<comment type="similarity">
    <text evidence="1">Belongs to the EutC family.</text>
</comment>
<feature type="chain" id="PRO_1000130103" description="Ethanolamine ammonia-lyase small subunit">
    <location>
        <begin position="1"/>
        <end position="298"/>
    </location>
</feature>
<feature type="region of interest" description="Disordered" evidence="2">
    <location>
        <begin position="17"/>
        <end position="37"/>
    </location>
</feature>
<feature type="binding site" evidence="1">
    <location>
        <position position="210"/>
    </location>
    <ligand>
        <name>adenosylcob(III)alamin</name>
        <dbReference type="ChEBI" id="CHEBI:18408"/>
    </ligand>
</feature>
<feature type="binding site" evidence="1">
    <location>
        <position position="231"/>
    </location>
    <ligand>
        <name>adenosylcob(III)alamin</name>
        <dbReference type="ChEBI" id="CHEBI:18408"/>
    </ligand>
</feature>
<feature type="binding site" evidence="1">
    <location>
        <position position="261"/>
    </location>
    <ligand>
        <name>adenosylcob(III)alamin</name>
        <dbReference type="ChEBI" id="CHEBI:18408"/>
    </ligand>
</feature>
<sequence>MDQKQIEEIVRSVMASMGQDVPQPVAPSKQEGAKPQCASPTVTESCALDLGSAEAKAWIGVENPHRADVLTELRRSTAARVCTGRAGPRPRTQALLRFLADHSRSKDTVLKEVPEEWVKAQGLLEVRSEISDKNLYLTRPDMGRRLSPEAIDALKSQCVMNPDVQVVVSDGLSTDAITANYEEILPPLLAGLKQAGLNVGTPFFVRYGRVKIEDQIGEILGAKVVILLVGERPGLGQSESLSCYAVYSPRVATTVEADRTCISNIHQGGTPPVEAAAVIVDLAKRMLEQKASGINMTR</sequence>
<evidence type="ECO:0000255" key="1">
    <source>
        <dbReference type="HAMAP-Rule" id="MF_00601"/>
    </source>
</evidence>
<evidence type="ECO:0000256" key="2">
    <source>
        <dbReference type="SAM" id="MobiDB-lite"/>
    </source>
</evidence>